<protein>
    <recommendedName>
        <fullName>GPI ethanolamine phosphate transferase 2</fullName>
        <ecNumber>2.-.-.-</ecNumber>
    </recommendedName>
    <alternativeName>
        <fullName>Glycosylphosphatidylinositol-anchor biosynthesis protein 7</fullName>
    </alternativeName>
</protein>
<sequence>MRFAFFGIFWLQIFGSILFLLGFFPHKNDSTGKAMSNQFSPPAVIDQVVFVMVDALRADFVFSKSHNMPFTQSLLYNSTHGIGFSAFARSPTVTMPRLKALTTGTIPGFLDVLLNIAESDTGSSIEAQDSWVYQLNSFNKKIEFYGDDTWLKLFPSAFSKFEGTTSFFVSDYTEVDNNVTRNFDHALPSSLSHSWDALILHYLGVDHIGHLYGPSSPLLNIKLLEIDTIISRIYKYLQEYDEKTNTHSLIVLCGDHGMNEVGNHGGSSSGETTAALSLLFPSNELSHINKPILNMDDNPYSILERVEQVDVVPTICLLLGIPIPKGNMGKVLSPVTELWKDTKTAKMAALSNLFQLSLLKNPSLTTSELSTQFQDSDLNDIRLALENLQSQMVAQSSSYSLDRMLVAISILGACSILSLILFRNLYNYKELLAFAPFVVQNIIIVFSSSFIEEEHVIWYFAAVSLSLLQLLNPKTRLAGSLQLFCLSIIKRWNQTGQKYSDLRDIVDDFIAPSTFMKTILCVTSAFMPAIRSPSPINFLSSMFIAFYKLMPIISKHLNELPIIASFDYTFFVRIIWSLLLISFLSKPTFKQLRCQLSLFILLLTRLENMGLYLLYDIWQRTMPEEGTLASVMYYVAEQVAFFSLGNSNSLATVDLSQAYTGLDSYNIFAVGILLFTSVFAGALWWCLHQPKRMMDRSVKTFWIMSSISLTFLCISCFIMRHHLFVWSVFSPKLLYNASWASMYFLAKCLISTIMVRLR</sequence>
<gene>
    <name type="primary">las21</name>
    <name type="synonym">gpi7</name>
    <name type="ORF">SPAC13G6.03</name>
</gene>
<reference key="1">
    <citation type="journal article" date="2002" name="Nature">
        <title>The genome sequence of Schizosaccharomyces pombe.</title>
        <authorList>
            <person name="Wood V."/>
            <person name="Gwilliam R."/>
            <person name="Rajandream M.A."/>
            <person name="Lyne M.H."/>
            <person name="Lyne R."/>
            <person name="Stewart A."/>
            <person name="Sgouros J.G."/>
            <person name="Peat N."/>
            <person name="Hayles J."/>
            <person name="Baker S.G."/>
            <person name="Basham D."/>
            <person name="Bowman S."/>
            <person name="Brooks K."/>
            <person name="Brown D."/>
            <person name="Brown S."/>
            <person name="Chillingworth T."/>
            <person name="Churcher C.M."/>
            <person name="Collins M."/>
            <person name="Connor R."/>
            <person name="Cronin A."/>
            <person name="Davis P."/>
            <person name="Feltwell T."/>
            <person name="Fraser A."/>
            <person name="Gentles S."/>
            <person name="Goble A."/>
            <person name="Hamlin N."/>
            <person name="Harris D.E."/>
            <person name="Hidalgo J."/>
            <person name="Hodgson G."/>
            <person name="Holroyd S."/>
            <person name="Hornsby T."/>
            <person name="Howarth S."/>
            <person name="Huckle E.J."/>
            <person name="Hunt S."/>
            <person name="Jagels K."/>
            <person name="James K.D."/>
            <person name="Jones L."/>
            <person name="Jones M."/>
            <person name="Leather S."/>
            <person name="McDonald S."/>
            <person name="McLean J."/>
            <person name="Mooney P."/>
            <person name="Moule S."/>
            <person name="Mungall K.L."/>
            <person name="Murphy L.D."/>
            <person name="Niblett D."/>
            <person name="Odell C."/>
            <person name="Oliver K."/>
            <person name="O'Neil S."/>
            <person name="Pearson D."/>
            <person name="Quail M.A."/>
            <person name="Rabbinowitsch E."/>
            <person name="Rutherford K.M."/>
            <person name="Rutter S."/>
            <person name="Saunders D."/>
            <person name="Seeger K."/>
            <person name="Sharp S."/>
            <person name="Skelton J."/>
            <person name="Simmonds M.N."/>
            <person name="Squares R."/>
            <person name="Squares S."/>
            <person name="Stevens K."/>
            <person name="Taylor K."/>
            <person name="Taylor R.G."/>
            <person name="Tivey A."/>
            <person name="Walsh S.V."/>
            <person name="Warren T."/>
            <person name="Whitehead S."/>
            <person name="Woodward J.R."/>
            <person name="Volckaert G."/>
            <person name="Aert R."/>
            <person name="Robben J."/>
            <person name="Grymonprez B."/>
            <person name="Weltjens I."/>
            <person name="Vanstreels E."/>
            <person name="Rieger M."/>
            <person name="Schaefer M."/>
            <person name="Mueller-Auer S."/>
            <person name="Gabel C."/>
            <person name="Fuchs M."/>
            <person name="Duesterhoeft A."/>
            <person name="Fritzc C."/>
            <person name="Holzer E."/>
            <person name="Moestl D."/>
            <person name="Hilbert H."/>
            <person name="Borzym K."/>
            <person name="Langer I."/>
            <person name="Beck A."/>
            <person name="Lehrach H."/>
            <person name="Reinhardt R."/>
            <person name="Pohl T.M."/>
            <person name="Eger P."/>
            <person name="Zimmermann W."/>
            <person name="Wedler H."/>
            <person name="Wambutt R."/>
            <person name="Purnelle B."/>
            <person name="Goffeau A."/>
            <person name="Cadieu E."/>
            <person name="Dreano S."/>
            <person name="Gloux S."/>
            <person name="Lelaure V."/>
            <person name="Mottier S."/>
            <person name="Galibert F."/>
            <person name="Aves S.J."/>
            <person name="Xiang Z."/>
            <person name="Hunt C."/>
            <person name="Moore K."/>
            <person name="Hurst S.M."/>
            <person name="Lucas M."/>
            <person name="Rochet M."/>
            <person name="Gaillardin C."/>
            <person name="Tallada V.A."/>
            <person name="Garzon A."/>
            <person name="Thode G."/>
            <person name="Daga R.R."/>
            <person name="Cruzado L."/>
            <person name="Jimenez J."/>
            <person name="Sanchez M."/>
            <person name="del Rey F."/>
            <person name="Benito J."/>
            <person name="Dominguez A."/>
            <person name="Revuelta J.L."/>
            <person name="Moreno S."/>
            <person name="Armstrong J."/>
            <person name="Forsburg S.L."/>
            <person name="Cerutti L."/>
            <person name="Lowe T."/>
            <person name="McCombie W.R."/>
            <person name="Paulsen I."/>
            <person name="Potashkin J."/>
            <person name="Shpakovski G.V."/>
            <person name="Ussery D."/>
            <person name="Barrell B.G."/>
            <person name="Nurse P."/>
        </authorList>
    </citation>
    <scope>NUCLEOTIDE SEQUENCE [LARGE SCALE GENOMIC DNA]</scope>
    <source>
        <strain>972 / ATCC 24843</strain>
    </source>
</reference>
<evidence type="ECO:0000250" key="1"/>
<evidence type="ECO:0000255" key="2"/>
<evidence type="ECO:0000305" key="3"/>
<keyword id="KW-0256">Endoplasmic reticulum</keyword>
<keyword id="KW-0325">Glycoprotein</keyword>
<keyword id="KW-0337">GPI-anchor biosynthesis</keyword>
<keyword id="KW-0472">Membrane</keyword>
<keyword id="KW-1185">Reference proteome</keyword>
<keyword id="KW-0808">Transferase</keyword>
<keyword id="KW-0812">Transmembrane</keyword>
<keyword id="KW-1133">Transmembrane helix</keyword>
<organism>
    <name type="scientific">Schizosaccharomyces pombe (strain 972 / ATCC 24843)</name>
    <name type="common">Fission yeast</name>
    <dbReference type="NCBI Taxonomy" id="284812"/>
    <lineage>
        <taxon>Eukaryota</taxon>
        <taxon>Fungi</taxon>
        <taxon>Dikarya</taxon>
        <taxon>Ascomycota</taxon>
        <taxon>Taphrinomycotina</taxon>
        <taxon>Schizosaccharomycetes</taxon>
        <taxon>Schizosaccharomycetales</taxon>
        <taxon>Schizosaccharomycetaceae</taxon>
        <taxon>Schizosaccharomyces</taxon>
    </lineage>
</organism>
<feature type="chain" id="PRO_0000116402" description="GPI ethanolamine phosphate transferase 2">
    <location>
        <begin position="1"/>
        <end position="758"/>
    </location>
</feature>
<feature type="transmembrane region" description="Helical" evidence="2">
    <location>
        <begin position="405"/>
        <end position="425"/>
    </location>
</feature>
<feature type="transmembrane region" description="Helical" evidence="2">
    <location>
        <begin position="431"/>
        <end position="451"/>
    </location>
</feature>
<feature type="transmembrane region" description="Helical" evidence="2">
    <location>
        <begin position="455"/>
        <end position="472"/>
    </location>
</feature>
<feature type="transmembrane region" description="Helical" evidence="2">
    <location>
        <begin position="533"/>
        <end position="553"/>
    </location>
</feature>
<feature type="transmembrane region" description="Helical" evidence="2">
    <location>
        <begin position="561"/>
        <end position="581"/>
    </location>
</feature>
<feature type="transmembrane region" description="Helical" evidence="2">
    <location>
        <begin position="598"/>
        <end position="618"/>
    </location>
</feature>
<feature type="transmembrane region" description="Helical" evidence="2">
    <location>
        <begin position="667"/>
        <end position="687"/>
    </location>
</feature>
<feature type="transmembrane region" description="Helical" evidence="2">
    <location>
        <begin position="698"/>
        <end position="718"/>
    </location>
</feature>
<feature type="transmembrane region" description="Helical" evidence="2">
    <location>
        <begin position="733"/>
        <end position="753"/>
    </location>
</feature>
<feature type="glycosylation site" description="N-linked (GlcNAc...) asparagine" evidence="2">
    <location>
        <position position="28"/>
    </location>
</feature>
<feature type="glycosylation site" description="N-linked (GlcNAc...) asparagine" evidence="2">
    <location>
        <position position="77"/>
    </location>
</feature>
<feature type="glycosylation site" description="N-linked (GlcNAc...) asparagine" evidence="2">
    <location>
        <position position="178"/>
    </location>
</feature>
<feature type="glycosylation site" description="N-linked (GlcNAc...) asparagine" evidence="2">
    <location>
        <position position="493"/>
    </location>
</feature>
<name>GPI7_SCHPO</name>
<comment type="function">
    <text evidence="1">Ethanolamine phosphate transferase involved in glycosylphosphatidylinositol-anchor biosynthesis. Transfers ethanolamine phosphate to the GPI second mannose (By similarity).</text>
</comment>
<comment type="pathway">
    <text>Glycolipid biosynthesis; glycosylphosphatidylinositol-anchor biosynthesis.</text>
</comment>
<comment type="subcellular location">
    <subcellularLocation>
        <location evidence="1">Endoplasmic reticulum membrane</location>
        <topology evidence="1">Multi-pass membrane protein</topology>
    </subcellularLocation>
</comment>
<comment type="similarity">
    <text evidence="3">Belongs to the PIGG/PIGN/PIGO family. PIGG subfamily.</text>
</comment>
<accession>Q09782</accession>
<dbReference type="EC" id="2.-.-.-"/>
<dbReference type="EMBL" id="CU329670">
    <property type="protein sequence ID" value="CAA91096.1"/>
    <property type="molecule type" value="Genomic_DNA"/>
</dbReference>
<dbReference type="PIR" id="S62432">
    <property type="entry name" value="S62432"/>
</dbReference>
<dbReference type="RefSeq" id="NP_592829.1">
    <property type="nucleotide sequence ID" value="NM_001018230.2"/>
</dbReference>
<dbReference type="SMR" id="Q09782"/>
<dbReference type="BioGRID" id="279281">
    <property type="interactions" value="1"/>
</dbReference>
<dbReference type="FunCoup" id="Q09782">
    <property type="interactions" value="363"/>
</dbReference>
<dbReference type="STRING" id="284812.Q09782"/>
<dbReference type="GlyCosmos" id="Q09782">
    <property type="glycosylation" value="4 sites, No reported glycans"/>
</dbReference>
<dbReference type="iPTMnet" id="Q09782"/>
<dbReference type="PaxDb" id="4896-SPAC13G6.03.1"/>
<dbReference type="EnsemblFungi" id="SPAC13G6.03.1">
    <property type="protein sequence ID" value="SPAC13G6.03.1:pep"/>
    <property type="gene ID" value="SPAC13G6.03"/>
</dbReference>
<dbReference type="GeneID" id="2542835"/>
<dbReference type="KEGG" id="spo:2542835"/>
<dbReference type="PomBase" id="SPAC13G6.03"/>
<dbReference type="VEuPathDB" id="FungiDB:SPAC13G6.03"/>
<dbReference type="eggNOG" id="KOG2125">
    <property type="taxonomic scope" value="Eukaryota"/>
</dbReference>
<dbReference type="HOGENOM" id="CLU_004770_0_0_1"/>
<dbReference type="InParanoid" id="Q09782"/>
<dbReference type="OMA" id="SWNQTGQ"/>
<dbReference type="PhylomeDB" id="Q09782"/>
<dbReference type="UniPathway" id="UPA00196"/>
<dbReference type="PRO" id="PR:Q09782"/>
<dbReference type="Proteomes" id="UP000002485">
    <property type="component" value="Chromosome I"/>
</dbReference>
<dbReference type="GO" id="GO:0005783">
    <property type="term" value="C:endoplasmic reticulum"/>
    <property type="evidence" value="ECO:0000314"/>
    <property type="project" value="CACAO"/>
</dbReference>
<dbReference type="GO" id="GO:0005789">
    <property type="term" value="C:endoplasmic reticulum membrane"/>
    <property type="evidence" value="ECO:0000318"/>
    <property type="project" value="GO_Central"/>
</dbReference>
<dbReference type="GO" id="GO:0051267">
    <property type="term" value="F:CP2 mannose-ethanolamine phosphotransferase activity"/>
    <property type="evidence" value="ECO:0000318"/>
    <property type="project" value="GO_Central"/>
</dbReference>
<dbReference type="GO" id="GO:0006506">
    <property type="term" value="P:GPI anchor biosynthetic process"/>
    <property type="evidence" value="ECO:0000318"/>
    <property type="project" value="GO_Central"/>
</dbReference>
<dbReference type="CDD" id="cd16024">
    <property type="entry name" value="GPI_EPT_2"/>
    <property type="match status" value="1"/>
</dbReference>
<dbReference type="Gene3D" id="3.40.720.10">
    <property type="entry name" value="Alkaline Phosphatase, subunit A"/>
    <property type="match status" value="1"/>
</dbReference>
<dbReference type="InterPro" id="IPR017850">
    <property type="entry name" value="Alkaline_phosphatase_core_sf"/>
</dbReference>
<dbReference type="InterPro" id="IPR002591">
    <property type="entry name" value="Phosphodiest/P_Trfase"/>
</dbReference>
<dbReference type="InterPro" id="IPR037674">
    <property type="entry name" value="PIG-G_N"/>
</dbReference>
<dbReference type="InterPro" id="IPR039527">
    <property type="entry name" value="PIGG/GPI7"/>
</dbReference>
<dbReference type="InterPro" id="IPR045687">
    <property type="entry name" value="PIGG/GPI7_C"/>
</dbReference>
<dbReference type="PANTHER" id="PTHR23072:SF0">
    <property type="entry name" value="GPI ETHANOLAMINE PHOSPHATE TRANSFERASE 2"/>
    <property type="match status" value="1"/>
</dbReference>
<dbReference type="PANTHER" id="PTHR23072">
    <property type="entry name" value="PHOSPHATIDYLINOSITOL GLYCAN-RELATED"/>
    <property type="match status" value="1"/>
</dbReference>
<dbReference type="Pfam" id="PF01663">
    <property type="entry name" value="Phosphodiest"/>
    <property type="match status" value="1"/>
</dbReference>
<dbReference type="Pfam" id="PF19316">
    <property type="entry name" value="PIGO_PIGG"/>
    <property type="match status" value="2"/>
</dbReference>
<dbReference type="SUPFAM" id="SSF53649">
    <property type="entry name" value="Alkaline phosphatase-like"/>
    <property type="match status" value="1"/>
</dbReference>
<proteinExistence type="inferred from homology"/>